<name>Y403_PSEA8</name>
<accession>B7V3Z2</accession>
<feature type="chain" id="PRO_1000198286" description="UPF0301 protein PLES_04031">
    <location>
        <begin position="1"/>
        <end position="189"/>
    </location>
</feature>
<dbReference type="EMBL" id="FM209186">
    <property type="protein sequence ID" value="CAW25130.1"/>
    <property type="molecule type" value="Genomic_DNA"/>
</dbReference>
<dbReference type="RefSeq" id="WP_003100947.1">
    <property type="nucleotide sequence ID" value="NC_011770.1"/>
</dbReference>
<dbReference type="SMR" id="B7V3Z2"/>
<dbReference type="KEGG" id="pag:PLES_04031"/>
<dbReference type="HOGENOM" id="CLU_057596_1_0_6"/>
<dbReference type="GO" id="GO:0005829">
    <property type="term" value="C:cytosol"/>
    <property type="evidence" value="ECO:0007669"/>
    <property type="project" value="TreeGrafter"/>
</dbReference>
<dbReference type="Gene3D" id="3.40.1740.10">
    <property type="entry name" value="VC0467-like"/>
    <property type="match status" value="1"/>
</dbReference>
<dbReference type="HAMAP" id="MF_00758">
    <property type="entry name" value="UPF0301"/>
    <property type="match status" value="1"/>
</dbReference>
<dbReference type="InterPro" id="IPR003774">
    <property type="entry name" value="AlgH-like"/>
</dbReference>
<dbReference type="NCBIfam" id="NF001266">
    <property type="entry name" value="PRK00228.1-1"/>
    <property type="match status" value="1"/>
</dbReference>
<dbReference type="PANTHER" id="PTHR30327">
    <property type="entry name" value="UNCHARACTERIZED PROTEIN YQGE"/>
    <property type="match status" value="1"/>
</dbReference>
<dbReference type="PANTHER" id="PTHR30327:SF1">
    <property type="entry name" value="UPF0301 PROTEIN YQGE"/>
    <property type="match status" value="1"/>
</dbReference>
<dbReference type="Pfam" id="PF02622">
    <property type="entry name" value="DUF179"/>
    <property type="match status" value="1"/>
</dbReference>
<dbReference type="SUPFAM" id="SSF143456">
    <property type="entry name" value="VC0467-like"/>
    <property type="match status" value="1"/>
</dbReference>
<reference key="1">
    <citation type="journal article" date="2009" name="Genome Res.">
        <title>Newly introduced genomic prophage islands are critical determinants of in vivo competitiveness in the Liverpool epidemic strain of Pseudomonas aeruginosa.</title>
        <authorList>
            <person name="Winstanley C."/>
            <person name="Langille M.G.I."/>
            <person name="Fothergill J.L."/>
            <person name="Kukavica-Ibrulj I."/>
            <person name="Paradis-Bleau C."/>
            <person name="Sanschagrin F."/>
            <person name="Thomson N.R."/>
            <person name="Winsor G.L."/>
            <person name="Quail M.A."/>
            <person name="Lennard N."/>
            <person name="Bignell A."/>
            <person name="Clarke L."/>
            <person name="Seeger K."/>
            <person name="Saunders D."/>
            <person name="Harris D."/>
            <person name="Parkhill J."/>
            <person name="Hancock R.E.W."/>
            <person name="Brinkman F.S.L."/>
            <person name="Levesque R.C."/>
        </authorList>
    </citation>
    <scope>NUCLEOTIDE SEQUENCE [LARGE SCALE GENOMIC DNA]</scope>
    <source>
        <strain>LESB58</strain>
    </source>
</reference>
<protein>
    <recommendedName>
        <fullName evidence="1">UPF0301 protein PLES_04031</fullName>
    </recommendedName>
</protein>
<evidence type="ECO:0000255" key="1">
    <source>
        <dbReference type="HAMAP-Rule" id="MF_00758"/>
    </source>
</evidence>
<proteinExistence type="inferred from homology"/>
<sequence length="189" mass="20212">MKQSSPTYLKHHFLIAMPHMADPNFAQTVTYLVEHNEQGAMGLVINRPSGLNLAEVLEQLKPDALPPARCQHIDIYNGGPVQTDRGFVLHPSGLSYQSTLELGELAMSTSQDVLFAIAAGTGPEKSLISLGYAGWEAGQLEAELSDNAWLTCPADPAILFDLPPEERLSAAAARLGVNLSLLTAQAGHA</sequence>
<comment type="similarity">
    <text evidence="1">Belongs to the UPF0301 (AlgH) family.</text>
</comment>
<gene>
    <name type="ordered locus">PLES_04031</name>
</gene>
<organism>
    <name type="scientific">Pseudomonas aeruginosa (strain LESB58)</name>
    <dbReference type="NCBI Taxonomy" id="557722"/>
    <lineage>
        <taxon>Bacteria</taxon>
        <taxon>Pseudomonadati</taxon>
        <taxon>Pseudomonadota</taxon>
        <taxon>Gammaproteobacteria</taxon>
        <taxon>Pseudomonadales</taxon>
        <taxon>Pseudomonadaceae</taxon>
        <taxon>Pseudomonas</taxon>
    </lineage>
</organism>